<organism>
    <name type="scientific">Shigella sonnei (strain Ss046)</name>
    <dbReference type="NCBI Taxonomy" id="300269"/>
    <lineage>
        <taxon>Bacteria</taxon>
        <taxon>Pseudomonadati</taxon>
        <taxon>Pseudomonadota</taxon>
        <taxon>Gammaproteobacteria</taxon>
        <taxon>Enterobacterales</taxon>
        <taxon>Enterobacteriaceae</taxon>
        <taxon>Shigella</taxon>
    </lineage>
</organism>
<sequence length="306" mass="33571">MSTLGHQYDNSLVSNAFGFLRLPMNFQPYDSDADWVITGVPFDMATSGRAGGRHGPAAIRQVSTNLAWEHNRFPWNFDMRERLNVVDCGDLVYAFGDAREMSEKLQAHAEKLLAAGKRMLTFGGDHFVTLPLLRAHAKHFGKMALVHFDAHTDTYANGCEFDHGTMFYTAPKEGLIDPNHSVQIGIRTEFDKDNGFTVLDACQVNDRSVDDVIAQVKQIVGDMPVYLTFDIDCLDPAFAPGTGTPVIGGLTSDRAIKLVRGLKDLNIVGMDVVEVAPAYDQSEITALAAATLALEMLYIQAAKKGE</sequence>
<accession>Q3YXT4</accession>
<evidence type="ECO:0000255" key="1">
    <source>
        <dbReference type="HAMAP-Rule" id="MF_01418"/>
    </source>
</evidence>
<name>SPEB_SHISS</name>
<feature type="chain" id="PRO_1000024287" description="Agmatinase">
    <location>
        <begin position="1"/>
        <end position="306"/>
    </location>
</feature>
<feature type="binding site" evidence="1">
    <location>
        <position position="126"/>
    </location>
    <ligand>
        <name>Mn(2+)</name>
        <dbReference type="ChEBI" id="CHEBI:29035"/>
    </ligand>
</feature>
<feature type="binding site" evidence="1">
    <location>
        <position position="149"/>
    </location>
    <ligand>
        <name>Mn(2+)</name>
        <dbReference type="ChEBI" id="CHEBI:29035"/>
    </ligand>
</feature>
<feature type="binding site" evidence="1">
    <location>
        <position position="151"/>
    </location>
    <ligand>
        <name>Mn(2+)</name>
        <dbReference type="ChEBI" id="CHEBI:29035"/>
    </ligand>
</feature>
<feature type="binding site" evidence="1">
    <location>
        <position position="153"/>
    </location>
    <ligand>
        <name>Mn(2+)</name>
        <dbReference type="ChEBI" id="CHEBI:29035"/>
    </ligand>
</feature>
<feature type="binding site" evidence="1">
    <location>
        <position position="230"/>
    </location>
    <ligand>
        <name>Mn(2+)</name>
        <dbReference type="ChEBI" id="CHEBI:29035"/>
    </ligand>
</feature>
<feature type="binding site" evidence="1">
    <location>
        <position position="232"/>
    </location>
    <ligand>
        <name>Mn(2+)</name>
        <dbReference type="ChEBI" id="CHEBI:29035"/>
    </ligand>
</feature>
<dbReference type="EC" id="3.5.3.11" evidence="1"/>
<dbReference type="EMBL" id="CP000038">
    <property type="protein sequence ID" value="AAZ89678.1"/>
    <property type="molecule type" value="Genomic_DNA"/>
</dbReference>
<dbReference type="RefSeq" id="WP_000105575.1">
    <property type="nucleotide sequence ID" value="NC_007384.1"/>
</dbReference>
<dbReference type="SMR" id="Q3YXT4"/>
<dbReference type="GeneID" id="93779058"/>
<dbReference type="KEGG" id="ssn:SSON_3091"/>
<dbReference type="HOGENOM" id="CLU_039478_0_0_6"/>
<dbReference type="UniPathway" id="UPA00534">
    <property type="reaction ID" value="UER00287"/>
</dbReference>
<dbReference type="Proteomes" id="UP000002529">
    <property type="component" value="Chromosome"/>
</dbReference>
<dbReference type="GO" id="GO:0008783">
    <property type="term" value="F:agmatinase activity"/>
    <property type="evidence" value="ECO:0007669"/>
    <property type="project" value="UniProtKB-UniRule"/>
</dbReference>
<dbReference type="GO" id="GO:0030145">
    <property type="term" value="F:manganese ion binding"/>
    <property type="evidence" value="ECO:0007669"/>
    <property type="project" value="InterPro"/>
</dbReference>
<dbReference type="GO" id="GO:0033389">
    <property type="term" value="P:putrescine biosynthetic process from arginine, via agmatine"/>
    <property type="evidence" value="ECO:0007669"/>
    <property type="project" value="TreeGrafter"/>
</dbReference>
<dbReference type="GO" id="GO:0008295">
    <property type="term" value="P:spermidine biosynthetic process"/>
    <property type="evidence" value="ECO:0007669"/>
    <property type="project" value="UniProtKB-UniRule"/>
</dbReference>
<dbReference type="CDD" id="cd11592">
    <property type="entry name" value="Agmatinase_PAH"/>
    <property type="match status" value="1"/>
</dbReference>
<dbReference type="FunFam" id="3.40.800.10:FF:000001">
    <property type="entry name" value="Agmatinase"/>
    <property type="match status" value="1"/>
</dbReference>
<dbReference type="Gene3D" id="3.40.800.10">
    <property type="entry name" value="Ureohydrolase domain"/>
    <property type="match status" value="1"/>
</dbReference>
<dbReference type="HAMAP" id="MF_01418">
    <property type="entry name" value="SpeB"/>
    <property type="match status" value="1"/>
</dbReference>
<dbReference type="InterPro" id="IPR023694">
    <property type="entry name" value="Agmatinase"/>
</dbReference>
<dbReference type="InterPro" id="IPR005925">
    <property type="entry name" value="Agmatinase-rel"/>
</dbReference>
<dbReference type="InterPro" id="IPR006035">
    <property type="entry name" value="Ureohydrolase"/>
</dbReference>
<dbReference type="InterPro" id="IPR023696">
    <property type="entry name" value="Ureohydrolase_dom_sf"/>
</dbReference>
<dbReference type="InterPro" id="IPR020855">
    <property type="entry name" value="Ureohydrolase_Mn_BS"/>
</dbReference>
<dbReference type="NCBIfam" id="TIGR01230">
    <property type="entry name" value="agmatinase"/>
    <property type="match status" value="1"/>
</dbReference>
<dbReference type="NCBIfam" id="NF002564">
    <property type="entry name" value="PRK02190.1"/>
    <property type="match status" value="1"/>
</dbReference>
<dbReference type="PANTHER" id="PTHR11358">
    <property type="entry name" value="ARGINASE/AGMATINASE"/>
    <property type="match status" value="1"/>
</dbReference>
<dbReference type="PANTHER" id="PTHR11358:SF26">
    <property type="entry name" value="GUANIDINO ACID HYDROLASE, MITOCHONDRIAL"/>
    <property type="match status" value="1"/>
</dbReference>
<dbReference type="Pfam" id="PF00491">
    <property type="entry name" value="Arginase"/>
    <property type="match status" value="1"/>
</dbReference>
<dbReference type="PIRSF" id="PIRSF036979">
    <property type="entry name" value="Arginase"/>
    <property type="match status" value="1"/>
</dbReference>
<dbReference type="SUPFAM" id="SSF52768">
    <property type="entry name" value="Arginase/deacetylase"/>
    <property type="match status" value="1"/>
</dbReference>
<dbReference type="PROSITE" id="PS01053">
    <property type="entry name" value="ARGINASE_1"/>
    <property type="match status" value="1"/>
</dbReference>
<dbReference type="PROSITE" id="PS51409">
    <property type="entry name" value="ARGINASE_2"/>
    <property type="match status" value="1"/>
</dbReference>
<proteinExistence type="inferred from homology"/>
<comment type="function">
    <text evidence="1">Catalyzes the formation of putrescine from agmatine.</text>
</comment>
<comment type="catalytic activity">
    <reaction evidence="1">
        <text>agmatine + H2O = urea + putrescine</text>
        <dbReference type="Rhea" id="RHEA:13929"/>
        <dbReference type="ChEBI" id="CHEBI:15377"/>
        <dbReference type="ChEBI" id="CHEBI:16199"/>
        <dbReference type="ChEBI" id="CHEBI:58145"/>
        <dbReference type="ChEBI" id="CHEBI:326268"/>
        <dbReference type="EC" id="3.5.3.11"/>
    </reaction>
</comment>
<comment type="cofactor">
    <cofactor evidence="1">
        <name>Mn(2+)</name>
        <dbReference type="ChEBI" id="CHEBI:29035"/>
    </cofactor>
</comment>
<comment type="pathway">
    <text evidence="1">Amine and polyamine biosynthesis; putrescine biosynthesis via agmatine pathway; putrescine from agmatine: step 1/1.</text>
</comment>
<comment type="similarity">
    <text evidence="1">Belongs to the arginase family. Agmatinase subfamily.</text>
</comment>
<reference key="1">
    <citation type="journal article" date="2005" name="Nucleic Acids Res.">
        <title>Genome dynamics and diversity of Shigella species, the etiologic agents of bacillary dysentery.</title>
        <authorList>
            <person name="Yang F."/>
            <person name="Yang J."/>
            <person name="Zhang X."/>
            <person name="Chen L."/>
            <person name="Jiang Y."/>
            <person name="Yan Y."/>
            <person name="Tang X."/>
            <person name="Wang J."/>
            <person name="Xiong Z."/>
            <person name="Dong J."/>
            <person name="Xue Y."/>
            <person name="Zhu Y."/>
            <person name="Xu X."/>
            <person name="Sun L."/>
            <person name="Chen S."/>
            <person name="Nie H."/>
            <person name="Peng J."/>
            <person name="Xu J."/>
            <person name="Wang Y."/>
            <person name="Yuan Z."/>
            <person name="Wen Y."/>
            <person name="Yao Z."/>
            <person name="Shen Y."/>
            <person name="Qiang B."/>
            <person name="Hou Y."/>
            <person name="Yu J."/>
            <person name="Jin Q."/>
        </authorList>
    </citation>
    <scope>NUCLEOTIDE SEQUENCE [LARGE SCALE GENOMIC DNA]</scope>
    <source>
        <strain>Ss046</strain>
    </source>
</reference>
<protein>
    <recommendedName>
        <fullName evidence="1">Agmatinase</fullName>
        <ecNumber evidence="1">3.5.3.11</ecNumber>
    </recommendedName>
    <alternativeName>
        <fullName evidence="1">Agmatine ureohydrolase</fullName>
        <shortName evidence="1">AUH</shortName>
    </alternativeName>
</protein>
<keyword id="KW-0378">Hydrolase</keyword>
<keyword id="KW-0464">Manganese</keyword>
<keyword id="KW-0479">Metal-binding</keyword>
<keyword id="KW-0620">Polyamine biosynthesis</keyword>
<keyword id="KW-0661">Putrescine biosynthesis</keyword>
<keyword id="KW-1185">Reference proteome</keyword>
<keyword id="KW-0745">Spermidine biosynthesis</keyword>
<gene>
    <name evidence="1" type="primary">speB</name>
    <name type="ordered locus">SSON_3091</name>
</gene>